<name>VF315_ASFWA</name>
<reference key="1">
    <citation type="submission" date="2003-03" db="EMBL/GenBank/DDBJ databases">
        <title>African swine fever virus genomes.</title>
        <authorList>
            <person name="Kutish G.F."/>
            <person name="Rock D.L."/>
        </authorList>
    </citation>
    <scope>NUCLEOTIDE SEQUENCE [LARGE SCALE GENOMIC DNA]</scope>
</reference>
<gene>
    <name type="ordered locus">War-078</name>
</gene>
<sequence length="315" mass="36821">MDALLKEIEKLSQPSLQKENNDVCDLCFMQMKKISNYQLLCEECGQLKDWFEPEYNEKFTVYSRLKIVGANSSYHQRDLDKANSSDYSSLQFHHILEELKTLNVKYMDAGQKPFPIQVLKETAHSYNQVQQHRVIRSITKLQILASILRSICLKLNIACTVADAARFTQLNTKGISRGMDLLRSLFVDNKITLNVDLNPIDSFINSTYNALQIKQIHQELQEENVYNLKEIVKSFILYADEKNIGVDLNRRTVVIATMYNVLRRAYYPIEIDTVVYQCKIRKNTITRALKMYEDYYSHFKSLYEQYHLNAAKKLI</sequence>
<organismHost>
    <name type="scientific">Ornithodoros</name>
    <name type="common">relapsing fever ticks</name>
    <dbReference type="NCBI Taxonomy" id="6937"/>
</organismHost>
<organismHost>
    <name type="scientific">Phacochoerus aethiopicus</name>
    <name type="common">Warthog</name>
    <dbReference type="NCBI Taxonomy" id="85517"/>
</organismHost>
<organismHost>
    <name type="scientific">Phacochoerus africanus</name>
    <name type="common">Warthog</name>
    <dbReference type="NCBI Taxonomy" id="41426"/>
</organismHost>
<organismHost>
    <name type="scientific">Potamochoerus larvatus</name>
    <name type="common">Bushpig</name>
    <dbReference type="NCBI Taxonomy" id="273792"/>
</organismHost>
<organismHost>
    <name type="scientific">Sus scrofa</name>
    <name type="common">Pig</name>
    <dbReference type="NCBI Taxonomy" id="9823"/>
</organismHost>
<accession>P0CAD8</accession>
<organism>
    <name type="scientific">African swine fever virus (isolate Warthog/Namibia/Wart80/1980)</name>
    <name type="common">ASFV</name>
    <dbReference type="NCBI Taxonomy" id="561444"/>
    <lineage>
        <taxon>Viruses</taxon>
        <taxon>Varidnaviria</taxon>
        <taxon>Bamfordvirae</taxon>
        <taxon>Nucleocytoviricota</taxon>
        <taxon>Pokkesviricetes</taxon>
        <taxon>Asfuvirales</taxon>
        <taxon>Asfarviridae</taxon>
        <taxon>Asfivirus</taxon>
        <taxon>African swine fever virus</taxon>
    </lineage>
</organism>
<protein>
    <recommendedName>
        <fullName>Uncharacterized protein C315R</fullName>
        <shortName>pC315R</shortName>
    </recommendedName>
</protein>
<comment type="similarity">
    <text evidence="1">Belongs to the asfivirus C315R family.</text>
</comment>
<evidence type="ECO:0000305" key="1"/>
<dbReference type="EMBL" id="AY261366">
    <property type="status" value="NOT_ANNOTATED_CDS"/>
    <property type="molecule type" value="Genomic_DNA"/>
</dbReference>
<dbReference type="Proteomes" id="UP000000858">
    <property type="component" value="Segment"/>
</dbReference>
<proteinExistence type="inferred from homology"/>
<feature type="chain" id="PRO_0000373643" description="Uncharacterized protein C315R">
    <location>
        <begin position="1"/>
        <end position="315"/>
    </location>
</feature>